<proteinExistence type="inferred from homology"/>
<name>RPPH_PSEPK</name>
<accession>Q88CN4</accession>
<evidence type="ECO:0000255" key="1">
    <source>
        <dbReference type="HAMAP-Rule" id="MF_00298"/>
    </source>
</evidence>
<reference key="1">
    <citation type="journal article" date="2002" name="Environ. Microbiol.">
        <title>Complete genome sequence and comparative analysis of the metabolically versatile Pseudomonas putida KT2440.</title>
        <authorList>
            <person name="Nelson K.E."/>
            <person name="Weinel C."/>
            <person name="Paulsen I.T."/>
            <person name="Dodson R.J."/>
            <person name="Hilbert H."/>
            <person name="Martins dos Santos V.A.P."/>
            <person name="Fouts D.E."/>
            <person name="Gill S.R."/>
            <person name="Pop M."/>
            <person name="Holmes M."/>
            <person name="Brinkac L.M."/>
            <person name="Beanan M.J."/>
            <person name="DeBoy R.T."/>
            <person name="Daugherty S.C."/>
            <person name="Kolonay J.F."/>
            <person name="Madupu R."/>
            <person name="Nelson W.C."/>
            <person name="White O."/>
            <person name="Peterson J.D."/>
            <person name="Khouri H.M."/>
            <person name="Hance I."/>
            <person name="Chris Lee P."/>
            <person name="Holtzapple E.K."/>
            <person name="Scanlan D."/>
            <person name="Tran K."/>
            <person name="Moazzez A."/>
            <person name="Utterback T.R."/>
            <person name="Rizzo M."/>
            <person name="Lee K."/>
            <person name="Kosack D."/>
            <person name="Moestl D."/>
            <person name="Wedler H."/>
            <person name="Lauber J."/>
            <person name="Stjepandic D."/>
            <person name="Hoheisel J."/>
            <person name="Straetz M."/>
            <person name="Heim S."/>
            <person name="Kiewitz C."/>
            <person name="Eisen J.A."/>
            <person name="Timmis K.N."/>
            <person name="Duesterhoeft A."/>
            <person name="Tuemmler B."/>
            <person name="Fraser C.M."/>
        </authorList>
    </citation>
    <scope>NUCLEOTIDE SEQUENCE [LARGE SCALE GENOMIC DNA]</scope>
    <source>
        <strain>ATCC 47054 / DSM 6125 / CFBP 8728 / NCIMB 11950 / KT2440</strain>
    </source>
</reference>
<protein>
    <recommendedName>
        <fullName evidence="1">RNA pyrophosphohydrolase</fullName>
        <ecNumber evidence="1">3.6.1.-</ecNumber>
    </recommendedName>
    <alternativeName>
        <fullName evidence="1">(Di)nucleoside polyphosphate hydrolase</fullName>
    </alternativeName>
</protein>
<sequence length="159" mass="18838">MIDPDGFRPNVGIILTNDAGQVLWARRINQDAWQFPQGGINPDETPEDALYRELNEEVGLERDDVEILACTRGWLRYRLPQRLVRTHSQPLCIGQKQKWFLLRLVSNEQRVRMDLTGKPEFDGWRWVSYWYPLGQVVTFKREVYRRALKELAPRLLTRD</sequence>
<feature type="chain" id="PRO_0000057018" description="RNA pyrophosphohydrolase">
    <location>
        <begin position="1"/>
        <end position="159"/>
    </location>
</feature>
<feature type="domain" description="Nudix hydrolase" evidence="1">
    <location>
        <begin position="6"/>
        <end position="149"/>
    </location>
</feature>
<feature type="short sequence motif" description="Nudix box">
    <location>
        <begin position="38"/>
        <end position="59"/>
    </location>
</feature>
<dbReference type="EC" id="3.6.1.-" evidence="1"/>
<dbReference type="EMBL" id="AE015451">
    <property type="protein sequence ID" value="AAN70711.1"/>
    <property type="molecule type" value="Genomic_DNA"/>
</dbReference>
<dbReference type="RefSeq" id="NP_747247.1">
    <property type="nucleotide sequence ID" value="NC_002947.4"/>
</dbReference>
<dbReference type="RefSeq" id="WP_003249017.1">
    <property type="nucleotide sequence ID" value="NZ_CP169744.1"/>
</dbReference>
<dbReference type="SMR" id="Q88CN4"/>
<dbReference type="STRING" id="160488.PP_5146"/>
<dbReference type="PaxDb" id="160488-PP_5146"/>
<dbReference type="KEGG" id="ppu:PP_5146"/>
<dbReference type="PATRIC" id="fig|160488.4.peg.5493"/>
<dbReference type="eggNOG" id="COG0494">
    <property type="taxonomic scope" value="Bacteria"/>
</dbReference>
<dbReference type="HOGENOM" id="CLU_087195_3_1_6"/>
<dbReference type="OrthoDB" id="9816040at2"/>
<dbReference type="PhylomeDB" id="Q88CN4"/>
<dbReference type="BioCyc" id="PPUT160488:G1G01-5491-MONOMER"/>
<dbReference type="Proteomes" id="UP000000556">
    <property type="component" value="Chromosome"/>
</dbReference>
<dbReference type="GO" id="GO:0005737">
    <property type="term" value="C:cytoplasm"/>
    <property type="evidence" value="ECO:0007669"/>
    <property type="project" value="TreeGrafter"/>
</dbReference>
<dbReference type="GO" id="GO:0034353">
    <property type="term" value="F:mRNA 5'-diphosphatase activity"/>
    <property type="evidence" value="ECO:0007669"/>
    <property type="project" value="TreeGrafter"/>
</dbReference>
<dbReference type="GO" id="GO:0006402">
    <property type="term" value="P:mRNA catabolic process"/>
    <property type="evidence" value="ECO:0007669"/>
    <property type="project" value="TreeGrafter"/>
</dbReference>
<dbReference type="CDD" id="cd03671">
    <property type="entry name" value="NUDIX_Ap4A_hydrolase_plant_like"/>
    <property type="match status" value="1"/>
</dbReference>
<dbReference type="FunFam" id="3.90.79.10:FF:000001">
    <property type="entry name" value="RNA pyrophosphohydrolase"/>
    <property type="match status" value="1"/>
</dbReference>
<dbReference type="Gene3D" id="3.90.79.10">
    <property type="entry name" value="Nucleoside Triphosphate Pyrophosphohydrolase"/>
    <property type="match status" value="1"/>
</dbReference>
<dbReference type="HAMAP" id="MF_00298">
    <property type="entry name" value="Nudix_RppH"/>
    <property type="match status" value="1"/>
</dbReference>
<dbReference type="InterPro" id="IPR020476">
    <property type="entry name" value="Nudix_hydrolase"/>
</dbReference>
<dbReference type="InterPro" id="IPR015797">
    <property type="entry name" value="NUDIX_hydrolase-like_dom_sf"/>
</dbReference>
<dbReference type="InterPro" id="IPR020084">
    <property type="entry name" value="NUDIX_hydrolase_CS"/>
</dbReference>
<dbReference type="InterPro" id="IPR000086">
    <property type="entry name" value="NUDIX_hydrolase_dom"/>
</dbReference>
<dbReference type="InterPro" id="IPR022927">
    <property type="entry name" value="RppH"/>
</dbReference>
<dbReference type="NCBIfam" id="NF001934">
    <property type="entry name" value="PRK00714.1-1"/>
    <property type="match status" value="1"/>
</dbReference>
<dbReference type="NCBIfam" id="NF001937">
    <property type="entry name" value="PRK00714.1-4"/>
    <property type="match status" value="1"/>
</dbReference>
<dbReference type="NCBIfam" id="NF001938">
    <property type="entry name" value="PRK00714.1-5"/>
    <property type="match status" value="1"/>
</dbReference>
<dbReference type="PANTHER" id="PTHR23114">
    <property type="entry name" value="M7GPPPN-MRNA HYDROLASE"/>
    <property type="match status" value="1"/>
</dbReference>
<dbReference type="PANTHER" id="PTHR23114:SF17">
    <property type="entry name" value="M7GPPPN-MRNA HYDROLASE"/>
    <property type="match status" value="1"/>
</dbReference>
<dbReference type="Pfam" id="PF00293">
    <property type="entry name" value="NUDIX"/>
    <property type="match status" value="1"/>
</dbReference>
<dbReference type="PRINTS" id="PR00502">
    <property type="entry name" value="NUDIXFAMILY"/>
</dbReference>
<dbReference type="SUPFAM" id="SSF55811">
    <property type="entry name" value="Nudix"/>
    <property type="match status" value="1"/>
</dbReference>
<dbReference type="PROSITE" id="PS51462">
    <property type="entry name" value="NUDIX"/>
    <property type="match status" value="1"/>
</dbReference>
<dbReference type="PROSITE" id="PS00893">
    <property type="entry name" value="NUDIX_BOX"/>
    <property type="match status" value="1"/>
</dbReference>
<keyword id="KW-0378">Hydrolase</keyword>
<keyword id="KW-1185">Reference proteome</keyword>
<comment type="function">
    <text evidence="1">Accelerates the degradation of transcripts by removing pyrophosphate from the 5'-end of triphosphorylated RNA, leading to a more labile monophosphorylated state that can stimulate subsequent ribonuclease cleavage.</text>
</comment>
<comment type="cofactor">
    <cofactor evidence="1">
        <name>a divalent metal cation</name>
        <dbReference type="ChEBI" id="CHEBI:60240"/>
    </cofactor>
</comment>
<comment type="similarity">
    <text evidence="1">Belongs to the Nudix hydrolase family. RppH subfamily.</text>
</comment>
<organism>
    <name type="scientific">Pseudomonas putida (strain ATCC 47054 / DSM 6125 / CFBP 8728 / NCIMB 11950 / KT2440)</name>
    <dbReference type="NCBI Taxonomy" id="160488"/>
    <lineage>
        <taxon>Bacteria</taxon>
        <taxon>Pseudomonadati</taxon>
        <taxon>Pseudomonadota</taxon>
        <taxon>Gammaproteobacteria</taxon>
        <taxon>Pseudomonadales</taxon>
        <taxon>Pseudomonadaceae</taxon>
        <taxon>Pseudomonas</taxon>
    </lineage>
</organism>
<gene>
    <name evidence="1" type="primary">rppH</name>
    <name evidence="1" type="synonym">nudH</name>
    <name type="ordered locus">PP_5146</name>
</gene>